<accession>Q1GCM7</accession>
<organism>
    <name type="scientific">Ruegeria sp. (strain TM1040)</name>
    <name type="common">Silicibacter sp.</name>
    <dbReference type="NCBI Taxonomy" id="292414"/>
    <lineage>
        <taxon>Bacteria</taxon>
        <taxon>Pseudomonadati</taxon>
        <taxon>Pseudomonadota</taxon>
        <taxon>Alphaproteobacteria</taxon>
        <taxon>Rhodobacterales</taxon>
        <taxon>Roseobacteraceae</taxon>
        <taxon>Ruegeria</taxon>
    </lineage>
</organism>
<sequence>MAENGAAEGTAQQPQVQMNILGQFIRDLSFENVMAQKGVGGEVQPDVNVQVALDAKKRSTENQYEVITKLNIESKNKAGGEVLFVLELEYVGIFNIAGVPEDQLHPFLLIECPRMLFPFLRRIVSDISRDGGFPPLNLDNIDFVAIYRNELARRQAEAPAEVTN</sequence>
<gene>
    <name evidence="1" type="primary">secB</name>
    <name type="ordered locus">TM1040_2857</name>
</gene>
<reference key="1">
    <citation type="submission" date="2006-05" db="EMBL/GenBank/DDBJ databases">
        <title>Complete sequence of chromosome of Silicibacter sp. TM1040.</title>
        <authorList>
            <consortium name="US DOE Joint Genome Institute"/>
            <person name="Copeland A."/>
            <person name="Lucas S."/>
            <person name="Lapidus A."/>
            <person name="Barry K."/>
            <person name="Detter J.C."/>
            <person name="Glavina del Rio T."/>
            <person name="Hammon N."/>
            <person name="Israni S."/>
            <person name="Dalin E."/>
            <person name="Tice H."/>
            <person name="Pitluck S."/>
            <person name="Brettin T."/>
            <person name="Bruce D."/>
            <person name="Han C."/>
            <person name="Tapia R."/>
            <person name="Goodwin L."/>
            <person name="Thompson L.S."/>
            <person name="Gilna P."/>
            <person name="Schmutz J."/>
            <person name="Larimer F."/>
            <person name="Land M."/>
            <person name="Hauser L."/>
            <person name="Kyrpides N."/>
            <person name="Kim E."/>
            <person name="Belas R."/>
            <person name="Moran M.A."/>
            <person name="Buchan A."/>
            <person name="Gonzalez J.M."/>
            <person name="Schell M.A."/>
            <person name="Sun F."/>
            <person name="Richardson P."/>
        </authorList>
    </citation>
    <scope>NUCLEOTIDE SEQUENCE [LARGE SCALE GENOMIC DNA]</scope>
    <source>
        <strain>TM1040</strain>
    </source>
</reference>
<dbReference type="EMBL" id="CP000377">
    <property type="protein sequence ID" value="ABF65589.1"/>
    <property type="molecule type" value="Genomic_DNA"/>
</dbReference>
<dbReference type="RefSeq" id="WP_011540170.1">
    <property type="nucleotide sequence ID" value="NC_008044.1"/>
</dbReference>
<dbReference type="SMR" id="Q1GCM7"/>
<dbReference type="STRING" id="292414.TM1040_2857"/>
<dbReference type="KEGG" id="sit:TM1040_2857"/>
<dbReference type="eggNOG" id="COG1952">
    <property type="taxonomic scope" value="Bacteria"/>
</dbReference>
<dbReference type="HOGENOM" id="CLU_111574_0_0_5"/>
<dbReference type="OrthoDB" id="9795145at2"/>
<dbReference type="Proteomes" id="UP000000636">
    <property type="component" value="Chromosome"/>
</dbReference>
<dbReference type="GO" id="GO:0005737">
    <property type="term" value="C:cytoplasm"/>
    <property type="evidence" value="ECO:0007669"/>
    <property type="project" value="UniProtKB-SubCell"/>
</dbReference>
<dbReference type="GO" id="GO:0051082">
    <property type="term" value="F:unfolded protein binding"/>
    <property type="evidence" value="ECO:0007669"/>
    <property type="project" value="InterPro"/>
</dbReference>
<dbReference type="GO" id="GO:0006457">
    <property type="term" value="P:protein folding"/>
    <property type="evidence" value="ECO:0007669"/>
    <property type="project" value="UniProtKB-UniRule"/>
</dbReference>
<dbReference type="GO" id="GO:0051262">
    <property type="term" value="P:protein tetramerization"/>
    <property type="evidence" value="ECO:0007669"/>
    <property type="project" value="InterPro"/>
</dbReference>
<dbReference type="GO" id="GO:0015031">
    <property type="term" value="P:protein transport"/>
    <property type="evidence" value="ECO:0007669"/>
    <property type="project" value="UniProtKB-UniRule"/>
</dbReference>
<dbReference type="Gene3D" id="3.10.420.10">
    <property type="entry name" value="SecB-like"/>
    <property type="match status" value="1"/>
</dbReference>
<dbReference type="HAMAP" id="MF_00821">
    <property type="entry name" value="SecB"/>
    <property type="match status" value="1"/>
</dbReference>
<dbReference type="InterPro" id="IPR003708">
    <property type="entry name" value="SecB"/>
</dbReference>
<dbReference type="InterPro" id="IPR035958">
    <property type="entry name" value="SecB-like_sf"/>
</dbReference>
<dbReference type="NCBIfam" id="NF004392">
    <property type="entry name" value="PRK05751.1-3"/>
    <property type="match status" value="1"/>
</dbReference>
<dbReference type="NCBIfam" id="TIGR00809">
    <property type="entry name" value="secB"/>
    <property type="match status" value="1"/>
</dbReference>
<dbReference type="PANTHER" id="PTHR36918">
    <property type="match status" value="1"/>
</dbReference>
<dbReference type="PANTHER" id="PTHR36918:SF1">
    <property type="entry name" value="PROTEIN-EXPORT PROTEIN SECB"/>
    <property type="match status" value="1"/>
</dbReference>
<dbReference type="Pfam" id="PF02556">
    <property type="entry name" value="SecB"/>
    <property type="match status" value="1"/>
</dbReference>
<dbReference type="PRINTS" id="PR01594">
    <property type="entry name" value="SECBCHAPRONE"/>
</dbReference>
<dbReference type="SUPFAM" id="SSF54611">
    <property type="entry name" value="SecB-like"/>
    <property type="match status" value="1"/>
</dbReference>
<comment type="function">
    <text evidence="1">One of the proteins required for the normal export of preproteins out of the cell cytoplasm. It is a molecular chaperone that binds to a subset of precursor proteins, maintaining them in a translocation-competent state. It also specifically binds to its receptor SecA.</text>
</comment>
<comment type="subunit">
    <text evidence="1">Homotetramer, a dimer of dimers. One homotetramer interacts with 1 SecA dimer.</text>
</comment>
<comment type="subcellular location">
    <subcellularLocation>
        <location evidence="1">Cytoplasm</location>
    </subcellularLocation>
</comment>
<comment type="similarity">
    <text evidence="1">Belongs to the SecB family.</text>
</comment>
<proteinExistence type="inferred from homology"/>
<feature type="chain" id="PRO_0000318265" description="Protein-export protein SecB">
    <location>
        <begin position="1"/>
        <end position="164"/>
    </location>
</feature>
<evidence type="ECO:0000255" key="1">
    <source>
        <dbReference type="HAMAP-Rule" id="MF_00821"/>
    </source>
</evidence>
<protein>
    <recommendedName>
        <fullName evidence="1">Protein-export protein SecB</fullName>
    </recommendedName>
</protein>
<keyword id="KW-0143">Chaperone</keyword>
<keyword id="KW-0963">Cytoplasm</keyword>
<keyword id="KW-0653">Protein transport</keyword>
<keyword id="KW-1185">Reference proteome</keyword>
<keyword id="KW-0811">Translocation</keyword>
<keyword id="KW-0813">Transport</keyword>
<name>SECB_RUEST</name>